<comment type="function">
    <text evidence="1">Binds together with bS18 to 16S ribosomal RNA.</text>
</comment>
<comment type="similarity">
    <text evidence="2">Belongs to the bacterial ribosomal protein bS6 family.</text>
</comment>
<accession>Q9X8U2</accession>
<gene>
    <name type="primary">rpsF</name>
    <name type="ordered locus">SCO3906</name>
    <name type="ORF">SCH24.28</name>
</gene>
<reference key="1">
    <citation type="journal article" date="2002" name="Nature">
        <title>Complete genome sequence of the model actinomycete Streptomyces coelicolor A3(2).</title>
        <authorList>
            <person name="Bentley S.D."/>
            <person name="Chater K.F."/>
            <person name="Cerdeno-Tarraga A.-M."/>
            <person name="Challis G.L."/>
            <person name="Thomson N.R."/>
            <person name="James K.D."/>
            <person name="Harris D.E."/>
            <person name="Quail M.A."/>
            <person name="Kieser H."/>
            <person name="Harper D."/>
            <person name="Bateman A."/>
            <person name="Brown S."/>
            <person name="Chandra G."/>
            <person name="Chen C.W."/>
            <person name="Collins M."/>
            <person name="Cronin A."/>
            <person name="Fraser A."/>
            <person name="Goble A."/>
            <person name="Hidalgo J."/>
            <person name="Hornsby T."/>
            <person name="Howarth S."/>
            <person name="Huang C.-H."/>
            <person name="Kieser T."/>
            <person name="Larke L."/>
            <person name="Murphy L.D."/>
            <person name="Oliver K."/>
            <person name="O'Neil S."/>
            <person name="Rabbinowitsch E."/>
            <person name="Rajandream M.A."/>
            <person name="Rutherford K.M."/>
            <person name="Rutter S."/>
            <person name="Seeger K."/>
            <person name="Saunders D."/>
            <person name="Sharp S."/>
            <person name="Squares R."/>
            <person name="Squares S."/>
            <person name="Taylor K."/>
            <person name="Warren T."/>
            <person name="Wietzorrek A."/>
            <person name="Woodward J.R."/>
            <person name="Barrell B.G."/>
            <person name="Parkhill J."/>
            <person name="Hopwood D.A."/>
        </authorList>
    </citation>
    <scope>NUCLEOTIDE SEQUENCE [LARGE SCALE GENOMIC DNA]</scope>
    <source>
        <strain>ATCC BAA-471 / A3(2) / M145</strain>
    </source>
</reference>
<name>RS6_STRCO</name>
<organism>
    <name type="scientific">Streptomyces coelicolor (strain ATCC BAA-471 / A3(2) / M145)</name>
    <dbReference type="NCBI Taxonomy" id="100226"/>
    <lineage>
        <taxon>Bacteria</taxon>
        <taxon>Bacillati</taxon>
        <taxon>Actinomycetota</taxon>
        <taxon>Actinomycetes</taxon>
        <taxon>Kitasatosporales</taxon>
        <taxon>Streptomycetaceae</taxon>
        <taxon>Streptomyces</taxon>
        <taxon>Streptomyces albidoflavus group</taxon>
    </lineage>
</organism>
<dbReference type="EMBL" id="AL939118">
    <property type="protein sequence ID" value="CAB42734.1"/>
    <property type="molecule type" value="Genomic_DNA"/>
</dbReference>
<dbReference type="PIR" id="T36593">
    <property type="entry name" value="T36593"/>
</dbReference>
<dbReference type="RefSeq" id="NP_628092.1">
    <property type="nucleotide sequence ID" value="NC_003888.3"/>
</dbReference>
<dbReference type="RefSeq" id="WP_003975025.1">
    <property type="nucleotide sequence ID" value="NZ_VNID01000003.1"/>
</dbReference>
<dbReference type="SMR" id="Q9X8U2"/>
<dbReference type="FunCoup" id="Q9X8U2">
    <property type="interactions" value="116"/>
</dbReference>
<dbReference type="STRING" id="100226.gene:17761533"/>
<dbReference type="PaxDb" id="100226-SCO3906"/>
<dbReference type="GeneID" id="97463764"/>
<dbReference type="KEGG" id="sco:SCO3906"/>
<dbReference type="PATRIC" id="fig|100226.15.peg.3980"/>
<dbReference type="eggNOG" id="COG0360">
    <property type="taxonomic scope" value="Bacteria"/>
</dbReference>
<dbReference type="HOGENOM" id="CLU_113441_5_3_11"/>
<dbReference type="InParanoid" id="Q9X8U2"/>
<dbReference type="OrthoDB" id="9812702at2"/>
<dbReference type="PhylomeDB" id="Q9X8U2"/>
<dbReference type="Proteomes" id="UP000001973">
    <property type="component" value="Chromosome"/>
</dbReference>
<dbReference type="GO" id="GO:0005737">
    <property type="term" value="C:cytoplasm"/>
    <property type="evidence" value="ECO:0007669"/>
    <property type="project" value="UniProtKB-ARBA"/>
</dbReference>
<dbReference type="GO" id="GO:1990904">
    <property type="term" value="C:ribonucleoprotein complex"/>
    <property type="evidence" value="ECO:0007669"/>
    <property type="project" value="UniProtKB-KW"/>
</dbReference>
<dbReference type="GO" id="GO:0005840">
    <property type="term" value="C:ribosome"/>
    <property type="evidence" value="ECO:0007669"/>
    <property type="project" value="UniProtKB-KW"/>
</dbReference>
<dbReference type="GO" id="GO:0070181">
    <property type="term" value="F:small ribosomal subunit rRNA binding"/>
    <property type="evidence" value="ECO:0000318"/>
    <property type="project" value="GO_Central"/>
</dbReference>
<dbReference type="GO" id="GO:0003735">
    <property type="term" value="F:structural constituent of ribosome"/>
    <property type="evidence" value="ECO:0000318"/>
    <property type="project" value="GO_Central"/>
</dbReference>
<dbReference type="GO" id="GO:0006412">
    <property type="term" value="P:translation"/>
    <property type="evidence" value="ECO:0007669"/>
    <property type="project" value="UniProtKB-UniRule"/>
</dbReference>
<dbReference type="CDD" id="cd00473">
    <property type="entry name" value="bS6"/>
    <property type="match status" value="1"/>
</dbReference>
<dbReference type="FunFam" id="3.30.70.60:FF:000002">
    <property type="entry name" value="30S ribosomal protein S6"/>
    <property type="match status" value="1"/>
</dbReference>
<dbReference type="Gene3D" id="3.30.70.60">
    <property type="match status" value="1"/>
</dbReference>
<dbReference type="HAMAP" id="MF_00360">
    <property type="entry name" value="Ribosomal_bS6"/>
    <property type="match status" value="1"/>
</dbReference>
<dbReference type="InterPro" id="IPR000529">
    <property type="entry name" value="Ribosomal_bS6"/>
</dbReference>
<dbReference type="InterPro" id="IPR020815">
    <property type="entry name" value="Ribosomal_bS6_CS"/>
</dbReference>
<dbReference type="InterPro" id="IPR035980">
    <property type="entry name" value="Ribosomal_bS6_sf"/>
</dbReference>
<dbReference type="InterPro" id="IPR020814">
    <property type="entry name" value="Ribosomal_S6_plastid/chlpt"/>
</dbReference>
<dbReference type="InterPro" id="IPR014717">
    <property type="entry name" value="Transl_elong_EF1B/ribsomal_bS6"/>
</dbReference>
<dbReference type="NCBIfam" id="TIGR00166">
    <property type="entry name" value="S6"/>
    <property type="match status" value="1"/>
</dbReference>
<dbReference type="PANTHER" id="PTHR21011">
    <property type="entry name" value="MITOCHONDRIAL 28S RIBOSOMAL PROTEIN S6"/>
    <property type="match status" value="1"/>
</dbReference>
<dbReference type="PANTHER" id="PTHR21011:SF1">
    <property type="entry name" value="SMALL RIBOSOMAL SUBUNIT PROTEIN BS6M"/>
    <property type="match status" value="1"/>
</dbReference>
<dbReference type="Pfam" id="PF01250">
    <property type="entry name" value="Ribosomal_S6"/>
    <property type="match status" value="1"/>
</dbReference>
<dbReference type="SUPFAM" id="SSF54995">
    <property type="entry name" value="Ribosomal protein S6"/>
    <property type="match status" value="1"/>
</dbReference>
<dbReference type="PROSITE" id="PS01048">
    <property type="entry name" value="RIBOSOMAL_S6"/>
    <property type="match status" value="1"/>
</dbReference>
<proteinExistence type="inferred from homology"/>
<sequence>MRHYEVMVILDPDLEERSVSPLIENFLSVVRDGGGKVEKVDTWGRRRLSYEIKKKPEGIYSVIDLQAEPAVVKELDRQMNLNESVLRTKVLRPEMH</sequence>
<protein>
    <recommendedName>
        <fullName evidence="2">Small ribosomal subunit protein bS6</fullName>
    </recommendedName>
    <alternativeName>
        <fullName>30S ribosomal protein S6</fullName>
    </alternativeName>
</protein>
<keyword id="KW-1185">Reference proteome</keyword>
<keyword id="KW-0687">Ribonucleoprotein</keyword>
<keyword id="KW-0689">Ribosomal protein</keyword>
<keyword id="KW-0694">RNA-binding</keyword>
<keyword id="KW-0699">rRNA-binding</keyword>
<feature type="chain" id="PRO_0000176848" description="Small ribosomal subunit protein bS6">
    <location>
        <begin position="1"/>
        <end position="96"/>
    </location>
</feature>
<evidence type="ECO:0000250" key="1"/>
<evidence type="ECO:0000305" key="2"/>